<keyword id="KW-0496">Mitochondrion</keyword>
<keyword id="KW-1185">Reference proteome</keyword>
<keyword id="KW-0809">Transit peptide</keyword>
<evidence type="ECO:0000250" key="1"/>
<evidence type="ECO:0000255" key="2"/>
<evidence type="ECO:0000305" key="3"/>
<protein>
    <recommendedName>
        <fullName>Altered inheritance of mitochondria protein 41, mitochondrial</fullName>
    </recommendedName>
</protein>
<dbReference type="EMBL" id="CR380958">
    <property type="protein sequence ID" value="CAG61859.1"/>
    <property type="molecule type" value="Genomic_DNA"/>
</dbReference>
<dbReference type="RefSeq" id="XP_448889.1">
    <property type="nucleotide sequence ID" value="XM_448889.1"/>
</dbReference>
<dbReference type="SMR" id="Q6FLK5"/>
<dbReference type="FunCoup" id="Q6FLK5">
    <property type="interactions" value="129"/>
</dbReference>
<dbReference type="STRING" id="284593.Q6FLK5"/>
<dbReference type="EnsemblFungi" id="CAGL0L02717g-T">
    <property type="protein sequence ID" value="CAGL0L02717g-T-p1"/>
    <property type="gene ID" value="CAGL0L02717g"/>
</dbReference>
<dbReference type="KEGG" id="cgr:2890862"/>
<dbReference type="CGD" id="CAL0135424">
    <property type="gene designation" value="CAGL0L02717g"/>
</dbReference>
<dbReference type="VEuPathDB" id="FungiDB:CAGL0L02717g"/>
<dbReference type="eggNOG" id="ENOG502RZX9">
    <property type="taxonomic scope" value="Eukaryota"/>
</dbReference>
<dbReference type="HOGENOM" id="CLU_123460_0_0_1"/>
<dbReference type="InParanoid" id="Q6FLK5"/>
<dbReference type="OMA" id="CIRTINS"/>
<dbReference type="Proteomes" id="UP000002428">
    <property type="component" value="Chromosome L"/>
</dbReference>
<dbReference type="GO" id="GO:0005739">
    <property type="term" value="C:mitochondrion"/>
    <property type="evidence" value="ECO:0007669"/>
    <property type="project" value="UniProtKB-SubCell"/>
</dbReference>
<dbReference type="GO" id="GO:0016884">
    <property type="term" value="F:carbon-nitrogen ligase activity, with glutamine as amido-N-donor"/>
    <property type="evidence" value="ECO:0007669"/>
    <property type="project" value="InterPro"/>
</dbReference>
<dbReference type="Gene3D" id="1.10.1510.10">
    <property type="entry name" value="Uncharacterised protein YqeY/AIM41 PF09424, N-terminal domain"/>
    <property type="match status" value="1"/>
</dbReference>
<dbReference type="InterPro" id="IPR003789">
    <property type="entry name" value="Asn/Gln_tRNA_amidoTrase-B-like"/>
</dbReference>
<dbReference type="InterPro" id="IPR019004">
    <property type="entry name" value="YqeY/Aim41"/>
</dbReference>
<dbReference type="InterPro" id="IPR042184">
    <property type="entry name" value="YqeY/Aim41_N"/>
</dbReference>
<dbReference type="PANTHER" id="PTHR28055">
    <property type="entry name" value="ALTERED INHERITANCE OF MITOCHONDRIA PROTEIN 41, MITOCHONDRIAL"/>
    <property type="match status" value="1"/>
</dbReference>
<dbReference type="PANTHER" id="PTHR28055:SF1">
    <property type="entry name" value="ALTERED INHERITANCE OF MITOCHONDRIA PROTEIN 41, MITOCHONDRIAL"/>
    <property type="match status" value="1"/>
</dbReference>
<dbReference type="Pfam" id="PF09424">
    <property type="entry name" value="YqeY"/>
    <property type="match status" value="1"/>
</dbReference>
<dbReference type="SUPFAM" id="SSF89095">
    <property type="entry name" value="GatB/YqeY motif"/>
    <property type="match status" value="1"/>
</dbReference>
<name>AIM41_CANGA</name>
<reference key="1">
    <citation type="journal article" date="2004" name="Nature">
        <title>Genome evolution in yeasts.</title>
        <authorList>
            <person name="Dujon B."/>
            <person name="Sherman D."/>
            <person name="Fischer G."/>
            <person name="Durrens P."/>
            <person name="Casaregola S."/>
            <person name="Lafontaine I."/>
            <person name="de Montigny J."/>
            <person name="Marck C."/>
            <person name="Neuveglise C."/>
            <person name="Talla E."/>
            <person name="Goffard N."/>
            <person name="Frangeul L."/>
            <person name="Aigle M."/>
            <person name="Anthouard V."/>
            <person name="Babour A."/>
            <person name="Barbe V."/>
            <person name="Barnay S."/>
            <person name="Blanchin S."/>
            <person name="Beckerich J.-M."/>
            <person name="Beyne E."/>
            <person name="Bleykasten C."/>
            <person name="Boisrame A."/>
            <person name="Boyer J."/>
            <person name="Cattolico L."/>
            <person name="Confanioleri F."/>
            <person name="de Daruvar A."/>
            <person name="Despons L."/>
            <person name="Fabre E."/>
            <person name="Fairhead C."/>
            <person name="Ferry-Dumazet H."/>
            <person name="Groppi A."/>
            <person name="Hantraye F."/>
            <person name="Hennequin C."/>
            <person name="Jauniaux N."/>
            <person name="Joyet P."/>
            <person name="Kachouri R."/>
            <person name="Kerrest A."/>
            <person name="Koszul R."/>
            <person name="Lemaire M."/>
            <person name="Lesur I."/>
            <person name="Ma L."/>
            <person name="Muller H."/>
            <person name="Nicaud J.-M."/>
            <person name="Nikolski M."/>
            <person name="Oztas S."/>
            <person name="Ozier-Kalogeropoulos O."/>
            <person name="Pellenz S."/>
            <person name="Potier S."/>
            <person name="Richard G.-F."/>
            <person name="Straub M.-L."/>
            <person name="Suleau A."/>
            <person name="Swennen D."/>
            <person name="Tekaia F."/>
            <person name="Wesolowski-Louvel M."/>
            <person name="Westhof E."/>
            <person name="Wirth B."/>
            <person name="Zeniou-Meyer M."/>
            <person name="Zivanovic Y."/>
            <person name="Bolotin-Fukuhara M."/>
            <person name="Thierry A."/>
            <person name="Bouchier C."/>
            <person name="Caudron B."/>
            <person name="Scarpelli C."/>
            <person name="Gaillardin C."/>
            <person name="Weissenbach J."/>
            <person name="Wincker P."/>
            <person name="Souciet J.-L."/>
        </authorList>
    </citation>
    <scope>NUCLEOTIDE SEQUENCE [LARGE SCALE GENOMIC DNA]</scope>
    <source>
        <strain>ATCC 2001 / BCRC 20586 / JCM 3761 / NBRC 0622 / NRRL Y-65 / CBS 138</strain>
    </source>
</reference>
<gene>
    <name type="primary">AIM41</name>
    <name type="ordered locus">CAGL0L02717g</name>
</gene>
<comment type="subcellular location">
    <subcellularLocation>
        <location evidence="1">Mitochondrion</location>
    </subcellularLocation>
</comment>
<comment type="similarity">
    <text evidence="3">Belongs to the AIM41 family.</text>
</comment>
<sequence length="182" mass="21071">MLRYSYTIAPRLRLVRYNSTIYNNVIGTLKKDLKEAMSTKDALKKTAIKSILSTIKNNEIDAKDKSLLDEYSLHDAFTKMVAQRNDSIKEFIANKRDDLAEKDKQEIEVINKYLKELPVSSAEDLKTKATEYLKQLQESEPNLQLKQLFGKVDWDALTKDWKASQKSIRTTIVSEFKNIFKS</sequence>
<organism>
    <name type="scientific">Candida glabrata (strain ATCC 2001 / BCRC 20586 / JCM 3761 / NBRC 0622 / NRRL Y-65 / CBS 138)</name>
    <name type="common">Yeast</name>
    <name type="synonym">Nakaseomyces glabratus</name>
    <dbReference type="NCBI Taxonomy" id="284593"/>
    <lineage>
        <taxon>Eukaryota</taxon>
        <taxon>Fungi</taxon>
        <taxon>Dikarya</taxon>
        <taxon>Ascomycota</taxon>
        <taxon>Saccharomycotina</taxon>
        <taxon>Saccharomycetes</taxon>
        <taxon>Saccharomycetales</taxon>
        <taxon>Saccharomycetaceae</taxon>
        <taxon>Nakaseomyces</taxon>
    </lineage>
</organism>
<proteinExistence type="inferred from homology"/>
<feature type="transit peptide" description="Mitochondrion" evidence="2">
    <location>
        <begin position="1"/>
        <end position="17"/>
    </location>
</feature>
<feature type="chain" id="PRO_0000399863" description="Altered inheritance of mitochondria protein 41, mitochondrial">
    <location>
        <begin position="18"/>
        <end position="182"/>
    </location>
</feature>
<accession>Q6FLK5</accession>